<protein>
    <recommendedName>
        <fullName>Photosynthetic apparatus regulatory protein RegA</fullName>
    </recommendedName>
</protein>
<evidence type="ECO:0000255" key="1">
    <source>
        <dbReference type="PROSITE-ProRule" id="PRU00169"/>
    </source>
</evidence>
<evidence type="ECO:0000305" key="2"/>
<name>REGA_RHOCA</name>
<sequence length="184" mass="20437">MAEEEFAELGSDRSLLLVDDDNAFLTRLARAMEKRGFQTEIAETVSAGKAIVQNRAPAYAVIDLRLEDGNGLEVVEALRERRPEARIVVLTGYGAIATAVAAVKMGATDYLSKPADANDITNALLAKGEALPPPPENPMSADRVRWEHIQRVYELCDRNVSETARRLNMHRRTLQRILAKRSPR</sequence>
<proteinExistence type="inferred from homology"/>
<comment type="function">
    <text>Member of the two-component regulatory system RegB/RegA. Involved in transactivating anaerobic expression of the photosynthetic apparatus. It is a transcriptional regulator that is responsible for activating expression of the puf, puh, and puc operons in response to a decrease in oxygen tension.</text>
</comment>
<comment type="PTM">
    <text evidence="2">Phosphorylated by RegB.</text>
</comment>
<reference key="1">
    <citation type="journal article" date="1992" name="Cell">
        <title>Regulatory factors controlling photosynthetic reaction center and light-harvesting gene expression in Rhodobacter capsulatus.</title>
        <authorList>
            <person name="Sganga M.W."/>
            <person name="Bauer C.E."/>
        </authorList>
    </citation>
    <scope>NUCLEOTIDE SEQUENCE [GENOMIC DNA]</scope>
</reference>
<organism>
    <name type="scientific">Rhodobacter capsulatus</name>
    <name type="common">Rhodopseudomonas capsulata</name>
    <dbReference type="NCBI Taxonomy" id="1061"/>
    <lineage>
        <taxon>Bacteria</taxon>
        <taxon>Pseudomonadati</taxon>
        <taxon>Pseudomonadota</taxon>
        <taxon>Alphaproteobacteria</taxon>
        <taxon>Rhodobacterales</taxon>
        <taxon>Rhodobacter group</taxon>
        <taxon>Rhodobacter</taxon>
    </lineage>
</organism>
<accession>P42508</accession>
<dbReference type="EMBL" id="M64976">
    <property type="protein sequence ID" value="AAA26180.1"/>
    <property type="molecule type" value="Genomic_DNA"/>
</dbReference>
<dbReference type="PIR" id="A42219">
    <property type="entry name" value="A42219"/>
</dbReference>
<dbReference type="RefSeq" id="WP_013065792.1">
    <property type="nucleotide sequence ID" value="NZ_VIBE01000003.1"/>
</dbReference>
<dbReference type="SMR" id="P42508"/>
<dbReference type="OMA" id="WEHINRV"/>
<dbReference type="OrthoDB" id="9802426at2"/>
<dbReference type="GO" id="GO:0003677">
    <property type="term" value="F:DNA binding"/>
    <property type="evidence" value="ECO:0007669"/>
    <property type="project" value="UniProtKB-KW"/>
</dbReference>
<dbReference type="GO" id="GO:0000156">
    <property type="term" value="F:phosphorelay response regulator activity"/>
    <property type="evidence" value="ECO:0000315"/>
    <property type="project" value="CACAO"/>
</dbReference>
<dbReference type="CDD" id="cd17563">
    <property type="entry name" value="REC_RegA-like"/>
    <property type="match status" value="1"/>
</dbReference>
<dbReference type="FunFam" id="1.10.10.60:FF:000036">
    <property type="entry name" value="Two-component system response regulator"/>
    <property type="match status" value="1"/>
</dbReference>
<dbReference type="FunFam" id="3.40.50.2300:FF:000205">
    <property type="entry name" value="Two-component system response regulator"/>
    <property type="match status" value="1"/>
</dbReference>
<dbReference type="Gene3D" id="3.40.50.2300">
    <property type="match status" value="1"/>
</dbReference>
<dbReference type="Gene3D" id="1.10.10.60">
    <property type="entry name" value="Homeodomain-like"/>
    <property type="match status" value="1"/>
</dbReference>
<dbReference type="InterPro" id="IPR047772">
    <property type="entry name" value="ActR_PrrA_rreg"/>
</dbReference>
<dbReference type="InterPro" id="IPR050595">
    <property type="entry name" value="Bact_response_regulator"/>
</dbReference>
<dbReference type="InterPro" id="IPR011006">
    <property type="entry name" value="CheY-like_superfamily"/>
</dbReference>
<dbReference type="InterPro" id="IPR001789">
    <property type="entry name" value="Sig_transdc_resp-reg_receiver"/>
</dbReference>
<dbReference type="NCBIfam" id="NF033791">
    <property type="entry name" value="ActR_PrrA_rreg"/>
    <property type="match status" value="1"/>
</dbReference>
<dbReference type="PANTHER" id="PTHR44591:SF14">
    <property type="entry name" value="PROTEIN PILG"/>
    <property type="match status" value="1"/>
</dbReference>
<dbReference type="PANTHER" id="PTHR44591">
    <property type="entry name" value="STRESS RESPONSE REGULATOR PROTEIN 1"/>
    <property type="match status" value="1"/>
</dbReference>
<dbReference type="Pfam" id="PF00072">
    <property type="entry name" value="Response_reg"/>
    <property type="match status" value="1"/>
</dbReference>
<dbReference type="SMART" id="SM00448">
    <property type="entry name" value="REC"/>
    <property type="match status" value="1"/>
</dbReference>
<dbReference type="SUPFAM" id="SSF52172">
    <property type="entry name" value="CheY-like"/>
    <property type="match status" value="1"/>
</dbReference>
<dbReference type="PROSITE" id="PS50110">
    <property type="entry name" value="RESPONSE_REGULATORY"/>
    <property type="match status" value="1"/>
</dbReference>
<feature type="chain" id="PRO_0000081215" description="Photosynthetic apparatus regulatory protein RegA">
    <location>
        <begin position="1"/>
        <end position="184"/>
    </location>
</feature>
<feature type="domain" description="Response regulatory" evidence="1">
    <location>
        <begin position="14"/>
        <end position="128"/>
    </location>
</feature>
<feature type="modified residue" description="4-aspartylphosphate" evidence="1">
    <location>
        <position position="63"/>
    </location>
</feature>
<gene>
    <name type="primary">regA</name>
</gene>
<keyword id="KW-0010">Activator</keyword>
<keyword id="KW-0238">DNA-binding</keyword>
<keyword id="KW-0597">Phosphoprotein</keyword>
<keyword id="KW-0804">Transcription</keyword>
<keyword id="KW-0805">Transcription regulation</keyword>
<keyword id="KW-0902">Two-component regulatory system</keyword>